<gene>
    <name evidence="1" type="primary">bioW</name>
    <name type="ordered locus">SE_0182</name>
</gene>
<protein>
    <recommendedName>
        <fullName evidence="1">6-carboxyhexanoate--CoA ligase</fullName>
        <ecNumber evidence="1">6.2.1.14</ecNumber>
    </recommendedName>
    <alternativeName>
        <fullName evidence="1">Pimeloyl-CoA synthase</fullName>
    </alternativeName>
</protein>
<name>BIOW_STAES</name>
<feature type="chain" id="PRO_0000191023" description="6-carboxyhexanoate--CoA ligase">
    <location>
        <begin position="1"/>
        <end position="228"/>
    </location>
</feature>
<keyword id="KW-0067">ATP-binding</keyword>
<keyword id="KW-0093">Biotin biosynthesis</keyword>
<keyword id="KW-0436">Ligase</keyword>
<keyword id="KW-0460">Magnesium</keyword>
<keyword id="KW-0547">Nucleotide-binding</keyword>
<reference key="1">
    <citation type="journal article" date="2003" name="Mol. Microbiol.">
        <title>Genome-based analysis of virulence genes in a non-biofilm-forming Staphylococcus epidermidis strain (ATCC 12228).</title>
        <authorList>
            <person name="Zhang Y.-Q."/>
            <person name="Ren S.-X."/>
            <person name="Li H.-L."/>
            <person name="Wang Y.-X."/>
            <person name="Fu G."/>
            <person name="Yang J."/>
            <person name="Qin Z.-Q."/>
            <person name="Miao Y.-G."/>
            <person name="Wang W.-Y."/>
            <person name="Chen R.-S."/>
            <person name="Shen Y."/>
            <person name="Chen Z."/>
            <person name="Yuan Z.-H."/>
            <person name="Zhao G.-P."/>
            <person name="Qu D."/>
            <person name="Danchin A."/>
            <person name="Wen Y.-M."/>
        </authorList>
    </citation>
    <scope>NUCLEOTIDE SEQUENCE [LARGE SCALE GENOMIC DNA]</scope>
    <source>
        <strain>ATCC 12228 / FDA PCI 1200</strain>
    </source>
</reference>
<organism>
    <name type="scientific">Staphylococcus epidermidis (strain ATCC 12228 / FDA PCI 1200)</name>
    <dbReference type="NCBI Taxonomy" id="176280"/>
    <lineage>
        <taxon>Bacteria</taxon>
        <taxon>Bacillati</taxon>
        <taxon>Bacillota</taxon>
        <taxon>Bacilli</taxon>
        <taxon>Bacillales</taxon>
        <taxon>Staphylococcaceae</taxon>
        <taxon>Staphylococcus</taxon>
    </lineage>
</organism>
<accession>Q8CTZ3</accession>
<evidence type="ECO:0000255" key="1">
    <source>
        <dbReference type="HAMAP-Rule" id="MF_00668"/>
    </source>
</evidence>
<proteinExistence type="inferred from homology"/>
<comment type="function">
    <text evidence="1">Catalyzes the transformation of pimelate into pimeloyl-CoA with concomitant hydrolysis of ATP to AMP.</text>
</comment>
<comment type="catalytic activity">
    <reaction evidence="1">
        <text>heptanedioate + ATP + CoA = 6-carboxyhexanoyl-CoA + AMP + diphosphate</text>
        <dbReference type="Rhea" id="RHEA:14781"/>
        <dbReference type="ChEBI" id="CHEBI:30616"/>
        <dbReference type="ChEBI" id="CHEBI:33019"/>
        <dbReference type="ChEBI" id="CHEBI:36165"/>
        <dbReference type="ChEBI" id="CHEBI:57287"/>
        <dbReference type="ChEBI" id="CHEBI:57360"/>
        <dbReference type="ChEBI" id="CHEBI:456215"/>
        <dbReference type="EC" id="6.2.1.14"/>
    </reaction>
</comment>
<comment type="cofactor">
    <cofactor evidence="1">
        <name>Mg(2+)</name>
        <dbReference type="ChEBI" id="CHEBI:18420"/>
    </cofactor>
</comment>
<comment type="pathway">
    <text evidence="1">Metabolic intermediate metabolism; pimeloyl-CoA biosynthesis; pimeloyl-CoA from pimelate: step 1/1.</text>
</comment>
<comment type="subunit">
    <text evidence="1">Homodimer.</text>
</comment>
<comment type="similarity">
    <text evidence="1">Belongs to the BioW family.</text>
</comment>
<dbReference type="EC" id="6.2.1.14" evidence="1"/>
<dbReference type="EMBL" id="AE015929">
    <property type="protein sequence ID" value="AAO03779.1"/>
    <property type="molecule type" value="Genomic_DNA"/>
</dbReference>
<dbReference type="RefSeq" id="NP_763737.1">
    <property type="nucleotide sequence ID" value="NC_004461.1"/>
</dbReference>
<dbReference type="RefSeq" id="WP_002485516.1">
    <property type="nucleotide sequence ID" value="NC_004461.1"/>
</dbReference>
<dbReference type="SMR" id="Q8CTZ3"/>
<dbReference type="KEGG" id="sep:SE_0182"/>
<dbReference type="PATRIC" id="fig|176280.10.peg.165"/>
<dbReference type="eggNOG" id="COG1424">
    <property type="taxonomic scope" value="Bacteria"/>
</dbReference>
<dbReference type="HOGENOM" id="CLU_076858_0_0_9"/>
<dbReference type="OrthoDB" id="9792985at2"/>
<dbReference type="UniPathway" id="UPA00999">
    <property type="reaction ID" value="UER00351"/>
</dbReference>
<dbReference type="Proteomes" id="UP000001411">
    <property type="component" value="Chromosome"/>
</dbReference>
<dbReference type="GO" id="GO:0042410">
    <property type="term" value="F:6-carboxyhexanoate-CoA ligase activity"/>
    <property type="evidence" value="ECO:0007669"/>
    <property type="project" value="UniProtKB-UniRule"/>
</dbReference>
<dbReference type="GO" id="GO:0005524">
    <property type="term" value="F:ATP binding"/>
    <property type="evidence" value="ECO:0007669"/>
    <property type="project" value="UniProtKB-KW"/>
</dbReference>
<dbReference type="GO" id="GO:0000287">
    <property type="term" value="F:magnesium ion binding"/>
    <property type="evidence" value="ECO:0007669"/>
    <property type="project" value="UniProtKB-UniRule"/>
</dbReference>
<dbReference type="GO" id="GO:0009102">
    <property type="term" value="P:biotin biosynthetic process"/>
    <property type="evidence" value="ECO:0007669"/>
    <property type="project" value="UniProtKB-UniRule"/>
</dbReference>
<dbReference type="HAMAP" id="MF_00668">
    <property type="entry name" value="BioW"/>
    <property type="match status" value="1"/>
</dbReference>
<dbReference type="InterPro" id="IPR005499">
    <property type="entry name" value="BioW"/>
</dbReference>
<dbReference type="NCBIfam" id="NF002360">
    <property type="entry name" value="PRK01322.1"/>
    <property type="match status" value="1"/>
</dbReference>
<dbReference type="Pfam" id="PF03744">
    <property type="entry name" value="BioW"/>
    <property type="match status" value="1"/>
</dbReference>
<sequence>MYSIKMRASHEDIHISGAETMCEFEDLENYLKKYFNKAFNHENGNIDFLNLKIEKVKAPIQTLVALPVVENLNDTLTQLAKQTGVSEYALNKGLEFIKNDITYTGAIILSAQTGQRLDSTEQRGIRVTQLAFKTCKCNGEISERVKDARALATCINAFEGVKAELCVSDDLHYTTGYFASPKLGYRRIFNIKEKGTRHGGRIIFVDEGIHLNEYVSFLETVPKEIIEK</sequence>